<proteinExistence type="inferred from homology"/>
<name>GAL1_MYCBO</name>
<organism>
    <name type="scientific">Mycobacterium bovis (strain ATCC BAA-935 / AF2122/97)</name>
    <dbReference type="NCBI Taxonomy" id="233413"/>
    <lineage>
        <taxon>Bacteria</taxon>
        <taxon>Bacillati</taxon>
        <taxon>Actinomycetota</taxon>
        <taxon>Actinomycetes</taxon>
        <taxon>Mycobacteriales</taxon>
        <taxon>Mycobacteriaceae</taxon>
        <taxon>Mycobacterium</taxon>
        <taxon>Mycobacterium tuberculosis complex</taxon>
    </lineage>
</organism>
<reference key="1">
    <citation type="journal article" date="2003" name="Proc. Natl. Acad. Sci. U.S.A.">
        <title>The complete genome sequence of Mycobacterium bovis.</title>
        <authorList>
            <person name="Garnier T."/>
            <person name="Eiglmeier K."/>
            <person name="Camus J.-C."/>
            <person name="Medina N."/>
            <person name="Mansoor H."/>
            <person name="Pryor M."/>
            <person name="Duthoy S."/>
            <person name="Grondin S."/>
            <person name="Lacroix C."/>
            <person name="Monsempe C."/>
            <person name="Simon S."/>
            <person name="Harris B."/>
            <person name="Atkin R."/>
            <person name="Doggett J."/>
            <person name="Mayes R."/>
            <person name="Keating L."/>
            <person name="Wheeler P.R."/>
            <person name="Parkhill J."/>
            <person name="Barrell B.G."/>
            <person name="Cole S.T."/>
            <person name="Gordon S.V."/>
            <person name="Hewinson R.G."/>
        </authorList>
    </citation>
    <scope>NUCLEOTIDE SEQUENCE [LARGE SCALE GENOMIC DNA]</scope>
    <source>
        <strain>ATCC BAA-935 / AF2122/97</strain>
    </source>
</reference>
<reference key="2">
    <citation type="journal article" date="2017" name="Genome Announc.">
        <title>Updated reference genome sequence and annotation of Mycobacterium bovis AF2122/97.</title>
        <authorList>
            <person name="Malone K.M."/>
            <person name="Farrell D."/>
            <person name="Stuber T.P."/>
            <person name="Schubert O.T."/>
            <person name="Aebersold R."/>
            <person name="Robbe-Austerman S."/>
            <person name="Gordon S.V."/>
        </authorList>
    </citation>
    <scope>NUCLEOTIDE SEQUENCE [LARGE SCALE GENOMIC DNA]</scope>
    <scope>GENOME REANNOTATION</scope>
    <source>
        <strain>ATCC BAA-935 / AF2122/97</strain>
    </source>
</reference>
<gene>
    <name evidence="1" type="primary">galK</name>
    <name type="ordered locus">BQ2027_MB0636</name>
</gene>
<keyword id="KW-0067">ATP-binding</keyword>
<keyword id="KW-0119">Carbohydrate metabolism</keyword>
<keyword id="KW-0963">Cytoplasm</keyword>
<keyword id="KW-0299">Galactose metabolism</keyword>
<keyword id="KW-0418">Kinase</keyword>
<keyword id="KW-0460">Magnesium</keyword>
<keyword id="KW-0479">Metal-binding</keyword>
<keyword id="KW-0547">Nucleotide-binding</keyword>
<keyword id="KW-1185">Reference proteome</keyword>
<keyword id="KW-0808">Transferase</keyword>
<dbReference type="EC" id="2.7.1.6" evidence="1"/>
<dbReference type="EMBL" id="LT708304">
    <property type="protein sequence ID" value="SIT99234.1"/>
    <property type="molecule type" value="Genomic_DNA"/>
</dbReference>
<dbReference type="RefSeq" id="NP_854295.1">
    <property type="nucleotide sequence ID" value="NC_002945.3"/>
</dbReference>
<dbReference type="RefSeq" id="WP_003403225.1">
    <property type="nucleotide sequence ID" value="NC_002945.4"/>
</dbReference>
<dbReference type="SMR" id="Q7U1L7"/>
<dbReference type="KEGG" id="mbo:BQ2027_MB0636"/>
<dbReference type="PATRIC" id="fig|233413.5.peg.695"/>
<dbReference type="UniPathway" id="UPA00214"/>
<dbReference type="Proteomes" id="UP000001419">
    <property type="component" value="Chromosome"/>
</dbReference>
<dbReference type="GO" id="GO:0005829">
    <property type="term" value="C:cytosol"/>
    <property type="evidence" value="ECO:0007669"/>
    <property type="project" value="TreeGrafter"/>
</dbReference>
<dbReference type="GO" id="GO:0005524">
    <property type="term" value="F:ATP binding"/>
    <property type="evidence" value="ECO:0007669"/>
    <property type="project" value="UniProtKB-UniRule"/>
</dbReference>
<dbReference type="GO" id="GO:0004335">
    <property type="term" value="F:galactokinase activity"/>
    <property type="evidence" value="ECO:0007669"/>
    <property type="project" value="UniProtKB-UniRule"/>
</dbReference>
<dbReference type="GO" id="GO:0000287">
    <property type="term" value="F:magnesium ion binding"/>
    <property type="evidence" value="ECO:0007669"/>
    <property type="project" value="UniProtKB-UniRule"/>
</dbReference>
<dbReference type="GO" id="GO:0006012">
    <property type="term" value="P:galactose metabolic process"/>
    <property type="evidence" value="ECO:0007669"/>
    <property type="project" value="UniProtKB-UniRule"/>
</dbReference>
<dbReference type="FunFam" id="3.30.70.890:FF:000001">
    <property type="entry name" value="Galactokinase"/>
    <property type="match status" value="1"/>
</dbReference>
<dbReference type="Gene3D" id="3.30.230.10">
    <property type="match status" value="1"/>
</dbReference>
<dbReference type="Gene3D" id="3.30.70.890">
    <property type="entry name" value="GHMP kinase, C-terminal domain"/>
    <property type="match status" value="1"/>
</dbReference>
<dbReference type="HAMAP" id="MF_00246">
    <property type="entry name" value="Galactokinase"/>
    <property type="match status" value="1"/>
</dbReference>
<dbReference type="InterPro" id="IPR000705">
    <property type="entry name" value="Galactokinase"/>
</dbReference>
<dbReference type="InterPro" id="IPR022963">
    <property type="entry name" value="Galactokinase_bac"/>
</dbReference>
<dbReference type="InterPro" id="IPR019741">
    <property type="entry name" value="Galactokinase_CS"/>
</dbReference>
<dbReference type="InterPro" id="IPR019539">
    <property type="entry name" value="GalKase_N"/>
</dbReference>
<dbReference type="InterPro" id="IPR013750">
    <property type="entry name" value="GHMP_kinase_C_dom"/>
</dbReference>
<dbReference type="InterPro" id="IPR036554">
    <property type="entry name" value="GHMP_kinase_C_sf"/>
</dbReference>
<dbReference type="InterPro" id="IPR006204">
    <property type="entry name" value="GHMP_kinase_N_dom"/>
</dbReference>
<dbReference type="InterPro" id="IPR006206">
    <property type="entry name" value="Mevalonate/galactokinase"/>
</dbReference>
<dbReference type="InterPro" id="IPR020568">
    <property type="entry name" value="Ribosomal_Su5_D2-typ_SF"/>
</dbReference>
<dbReference type="InterPro" id="IPR014721">
    <property type="entry name" value="Ribsml_uS5_D2-typ_fold_subgr"/>
</dbReference>
<dbReference type="NCBIfam" id="TIGR00131">
    <property type="entry name" value="gal_kin"/>
    <property type="match status" value="1"/>
</dbReference>
<dbReference type="NCBIfam" id="NF001816">
    <property type="entry name" value="PRK00555.1"/>
    <property type="match status" value="1"/>
</dbReference>
<dbReference type="PANTHER" id="PTHR10457:SF7">
    <property type="entry name" value="GALACTOKINASE-RELATED"/>
    <property type="match status" value="1"/>
</dbReference>
<dbReference type="PANTHER" id="PTHR10457">
    <property type="entry name" value="MEVALONATE KINASE/GALACTOKINASE"/>
    <property type="match status" value="1"/>
</dbReference>
<dbReference type="Pfam" id="PF10509">
    <property type="entry name" value="GalKase_gal_bdg"/>
    <property type="match status" value="1"/>
</dbReference>
<dbReference type="Pfam" id="PF08544">
    <property type="entry name" value="GHMP_kinases_C"/>
    <property type="match status" value="1"/>
</dbReference>
<dbReference type="Pfam" id="PF00288">
    <property type="entry name" value="GHMP_kinases_N"/>
    <property type="match status" value="1"/>
</dbReference>
<dbReference type="PIRSF" id="PIRSF000530">
    <property type="entry name" value="Galactokinase"/>
    <property type="match status" value="1"/>
</dbReference>
<dbReference type="PRINTS" id="PR00473">
    <property type="entry name" value="GALCTOKINASE"/>
</dbReference>
<dbReference type="PRINTS" id="PR00959">
    <property type="entry name" value="MEVGALKINASE"/>
</dbReference>
<dbReference type="SUPFAM" id="SSF55060">
    <property type="entry name" value="GHMP Kinase, C-terminal domain"/>
    <property type="match status" value="1"/>
</dbReference>
<dbReference type="SUPFAM" id="SSF54211">
    <property type="entry name" value="Ribosomal protein S5 domain 2-like"/>
    <property type="match status" value="1"/>
</dbReference>
<dbReference type="PROSITE" id="PS00106">
    <property type="entry name" value="GALACTOKINASE"/>
    <property type="match status" value="1"/>
</dbReference>
<sequence>MTVSYGAPGRVNLIGEHTDYNLGFALPIALPRRTVVTFTPEHTGAITARSDRADGSARIPLDTTPGQVTGWAAYAAGAIWALRGAGHPVPGGAMSITSDVEIGSGLSSSAALIGAVLGAVGAATGTRIDRLERARLAQRAENDYVGAPTGLLDHLAALFGAPKTALLIDFRDITVRPVAFDPDACDVVLLLMDSRARHRHAGGEYALRRASCERAAADLGVSSLRAVQDRGLAALGAIADPIDARRARHVLTENQRVLDFAAALADSDFTAAGQLLTASHESMREDFAITTERIDLIAESAVRAGALGARMTGGGFGGAVIALVPADRARDVADTVRRAAVTAGYDEPAVSRTYAAPGAAECC</sequence>
<feature type="chain" id="PRO_0000184618" description="Galactokinase">
    <location>
        <begin position="1"/>
        <end position="363"/>
    </location>
</feature>
<feature type="active site" description="Proton acceptor" evidence="1">
    <location>
        <position position="153"/>
    </location>
</feature>
<feature type="binding site" evidence="1">
    <location>
        <begin position="16"/>
        <end position="19"/>
    </location>
    <ligand>
        <name>substrate</name>
    </ligand>
</feature>
<feature type="binding site" evidence="1">
    <location>
        <position position="50"/>
    </location>
    <ligand>
        <name>ATP</name>
        <dbReference type="ChEBI" id="CHEBI:30616"/>
    </ligand>
</feature>
<feature type="binding site" evidence="1">
    <location>
        <begin position="103"/>
        <end position="109"/>
    </location>
    <ligand>
        <name>ATP</name>
        <dbReference type="ChEBI" id="CHEBI:30616"/>
    </ligand>
</feature>
<feature type="binding site" evidence="1">
    <location>
        <position position="109"/>
    </location>
    <ligand>
        <name>Mg(2+)</name>
        <dbReference type="ChEBI" id="CHEBI:18420"/>
    </ligand>
</feature>
<feature type="binding site" evidence="1">
    <location>
        <position position="141"/>
    </location>
    <ligand>
        <name>Mg(2+)</name>
        <dbReference type="ChEBI" id="CHEBI:18420"/>
    </ligand>
</feature>
<feature type="binding site" evidence="1">
    <location>
        <position position="205"/>
    </location>
    <ligand>
        <name>substrate</name>
    </ligand>
</feature>
<feature type="site" description="Transition state stabilizer" evidence="1">
    <location>
        <position position="10"/>
    </location>
</feature>
<accession>Q7U1L7</accession>
<accession>A0A1R3XW07</accession>
<accession>X2BFN2</accession>
<comment type="function">
    <text evidence="1">Catalyzes the transfer of the gamma-phosphate of ATP to D-galactose to form alpha-D-galactose-1-phosphate (Gal-1-P).</text>
</comment>
<comment type="catalytic activity">
    <reaction evidence="1">
        <text>alpha-D-galactose + ATP = alpha-D-galactose 1-phosphate + ADP + H(+)</text>
        <dbReference type="Rhea" id="RHEA:13553"/>
        <dbReference type="ChEBI" id="CHEBI:15378"/>
        <dbReference type="ChEBI" id="CHEBI:28061"/>
        <dbReference type="ChEBI" id="CHEBI:30616"/>
        <dbReference type="ChEBI" id="CHEBI:58336"/>
        <dbReference type="ChEBI" id="CHEBI:456216"/>
        <dbReference type="EC" id="2.7.1.6"/>
    </reaction>
</comment>
<comment type="pathway">
    <text evidence="1">Carbohydrate metabolism; galactose metabolism.</text>
</comment>
<comment type="subcellular location">
    <subcellularLocation>
        <location evidence="1">Cytoplasm</location>
    </subcellularLocation>
</comment>
<comment type="similarity">
    <text evidence="1">Belongs to the GHMP kinase family. GalK subfamily.</text>
</comment>
<protein>
    <recommendedName>
        <fullName evidence="1">Galactokinase</fullName>
        <ecNumber evidence="1">2.7.1.6</ecNumber>
    </recommendedName>
    <alternativeName>
        <fullName evidence="1">Galactose kinase</fullName>
    </alternativeName>
</protein>
<evidence type="ECO:0000255" key="1">
    <source>
        <dbReference type="HAMAP-Rule" id="MF_00246"/>
    </source>
</evidence>